<protein>
    <recommendedName>
        <fullName evidence="1">Aspartate carbamoyltransferase catalytic subunit</fullName>
        <ecNumber evidence="1">2.1.3.2</ecNumber>
    </recommendedName>
    <alternativeName>
        <fullName evidence="1">Aspartate transcarbamylase</fullName>
        <shortName evidence="1">ATCase</shortName>
    </alternativeName>
</protein>
<reference key="1">
    <citation type="journal article" date="2008" name="J. Bacteriol.">
        <title>Genome sequence of Thermofilum pendens reveals an exceptional loss of biosynthetic pathways without genome reduction.</title>
        <authorList>
            <person name="Anderson I."/>
            <person name="Rodriguez J."/>
            <person name="Susanti D."/>
            <person name="Porat I."/>
            <person name="Reich C."/>
            <person name="Ulrich L.E."/>
            <person name="Elkins J.G."/>
            <person name="Mavromatis K."/>
            <person name="Lykidis A."/>
            <person name="Kim E."/>
            <person name="Thompson L.S."/>
            <person name="Nolan M."/>
            <person name="Land M."/>
            <person name="Copeland A."/>
            <person name="Lapidus A."/>
            <person name="Lucas S."/>
            <person name="Detter C."/>
            <person name="Zhulin I.B."/>
            <person name="Olsen G.J."/>
            <person name="Whitman W."/>
            <person name="Mukhopadhyay B."/>
            <person name="Bristow J."/>
            <person name="Kyrpides N."/>
        </authorList>
    </citation>
    <scope>NUCLEOTIDE SEQUENCE [LARGE SCALE GENOMIC DNA]</scope>
    <source>
        <strain>DSM 2475 / Hrk 5</strain>
    </source>
</reference>
<dbReference type="EC" id="2.1.3.2" evidence="1"/>
<dbReference type="EMBL" id="CP000505">
    <property type="protein sequence ID" value="ABL78555.1"/>
    <property type="molecule type" value="Genomic_DNA"/>
</dbReference>
<dbReference type="RefSeq" id="WP_011752820.1">
    <property type="nucleotide sequence ID" value="NC_008698.1"/>
</dbReference>
<dbReference type="SMR" id="A1RZC5"/>
<dbReference type="STRING" id="368408.Tpen_1157"/>
<dbReference type="EnsemblBacteria" id="ABL78555">
    <property type="protein sequence ID" value="ABL78555"/>
    <property type="gene ID" value="Tpen_1157"/>
</dbReference>
<dbReference type="GeneID" id="4602159"/>
<dbReference type="KEGG" id="tpe:Tpen_1157"/>
<dbReference type="eggNOG" id="arCOG00911">
    <property type="taxonomic scope" value="Archaea"/>
</dbReference>
<dbReference type="HOGENOM" id="CLU_043846_1_2_2"/>
<dbReference type="OrthoDB" id="7792at2157"/>
<dbReference type="UniPathway" id="UPA00070">
    <property type="reaction ID" value="UER00116"/>
</dbReference>
<dbReference type="Proteomes" id="UP000000641">
    <property type="component" value="Chromosome"/>
</dbReference>
<dbReference type="GO" id="GO:0016597">
    <property type="term" value="F:amino acid binding"/>
    <property type="evidence" value="ECO:0007669"/>
    <property type="project" value="InterPro"/>
</dbReference>
<dbReference type="GO" id="GO:0004070">
    <property type="term" value="F:aspartate carbamoyltransferase activity"/>
    <property type="evidence" value="ECO:0007669"/>
    <property type="project" value="UniProtKB-UniRule"/>
</dbReference>
<dbReference type="GO" id="GO:0006207">
    <property type="term" value="P:'de novo' pyrimidine nucleobase biosynthetic process"/>
    <property type="evidence" value="ECO:0007669"/>
    <property type="project" value="InterPro"/>
</dbReference>
<dbReference type="GO" id="GO:0044205">
    <property type="term" value="P:'de novo' UMP biosynthetic process"/>
    <property type="evidence" value="ECO:0007669"/>
    <property type="project" value="UniProtKB-UniRule"/>
</dbReference>
<dbReference type="GO" id="GO:0006520">
    <property type="term" value="P:amino acid metabolic process"/>
    <property type="evidence" value="ECO:0007669"/>
    <property type="project" value="InterPro"/>
</dbReference>
<dbReference type="FunFam" id="3.40.50.1370:FF:000002">
    <property type="entry name" value="Aspartate carbamoyltransferase 2"/>
    <property type="match status" value="1"/>
</dbReference>
<dbReference type="Gene3D" id="3.40.50.1370">
    <property type="entry name" value="Aspartate/ornithine carbamoyltransferase"/>
    <property type="match status" value="2"/>
</dbReference>
<dbReference type="HAMAP" id="MF_00001">
    <property type="entry name" value="Asp_carb_tr"/>
    <property type="match status" value="1"/>
</dbReference>
<dbReference type="InterPro" id="IPR006132">
    <property type="entry name" value="Asp/Orn_carbamoyltranf_P-bd"/>
</dbReference>
<dbReference type="InterPro" id="IPR006130">
    <property type="entry name" value="Asp/Orn_carbamoylTrfase"/>
</dbReference>
<dbReference type="InterPro" id="IPR036901">
    <property type="entry name" value="Asp/Orn_carbamoylTrfase_sf"/>
</dbReference>
<dbReference type="InterPro" id="IPR002082">
    <property type="entry name" value="Asp_carbamoyltransf"/>
</dbReference>
<dbReference type="InterPro" id="IPR006131">
    <property type="entry name" value="Asp_carbamoyltransf_Asp/Orn-bd"/>
</dbReference>
<dbReference type="NCBIfam" id="TIGR00670">
    <property type="entry name" value="asp_carb_tr"/>
    <property type="match status" value="1"/>
</dbReference>
<dbReference type="NCBIfam" id="NF002032">
    <property type="entry name" value="PRK00856.1"/>
    <property type="match status" value="1"/>
</dbReference>
<dbReference type="PANTHER" id="PTHR45753:SF6">
    <property type="entry name" value="ASPARTATE CARBAMOYLTRANSFERASE"/>
    <property type="match status" value="1"/>
</dbReference>
<dbReference type="PANTHER" id="PTHR45753">
    <property type="entry name" value="ORNITHINE CARBAMOYLTRANSFERASE, MITOCHONDRIAL"/>
    <property type="match status" value="1"/>
</dbReference>
<dbReference type="Pfam" id="PF00185">
    <property type="entry name" value="OTCace"/>
    <property type="match status" value="1"/>
</dbReference>
<dbReference type="Pfam" id="PF02729">
    <property type="entry name" value="OTCace_N"/>
    <property type="match status" value="1"/>
</dbReference>
<dbReference type="PRINTS" id="PR00100">
    <property type="entry name" value="AOTCASE"/>
</dbReference>
<dbReference type="PRINTS" id="PR00101">
    <property type="entry name" value="ATCASE"/>
</dbReference>
<dbReference type="SUPFAM" id="SSF53671">
    <property type="entry name" value="Aspartate/ornithine carbamoyltransferase"/>
    <property type="match status" value="1"/>
</dbReference>
<dbReference type="PROSITE" id="PS00097">
    <property type="entry name" value="CARBAMOYLTRANSFERASE"/>
    <property type="match status" value="1"/>
</dbReference>
<keyword id="KW-0665">Pyrimidine biosynthesis</keyword>
<keyword id="KW-1185">Reference proteome</keyword>
<keyword id="KW-0808">Transferase</keyword>
<proteinExistence type="inferred from homology"/>
<organism>
    <name type="scientific">Thermofilum pendens (strain DSM 2475 / Hrk 5)</name>
    <dbReference type="NCBI Taxonomy" id="368408"/>
    <lineage>
        <taxon>Archaea</taxon>
        <taxon>Thermoproteota</taxon>
        <taxon>Thermoprotei</taxon>
        <taxon>Thermofilales</taxon>
        <taxon>Thermofilaceae</taxon>
        <taxon>Thermofilum</taxon>
    </lineage>
</organism>
<sequence>MVSGLGSRGNPFYGRDVLSILDFSRSDLEYLFAEADRVRRDPSAFSGELRGYVLATAFFEPSTRTRLSFQAAMLRLGGSCIDLGELEKSSIAKGENFADTVRMLDAYADVIVVRHRLEGAARFAAEVAEKPVINAGDGKRHHPTQAMLDLYSVKTLKGSVDGLVYGVLGDLKYGRAAASFILGLSLFKPRKVYLISPGLLKAREDVKEALRERGVGFEEVESPSEVIGELDVLYVTRIQRERFPDPSEYEKVRGSYVVDSKLLRNAKEGLIVLHPLPRVDEISFDVDGTPHAKYFEQARLGIPLRMALLKLVLKG</sequence>
<gene>
    <name evidence="1" type="primary">pyrB</name>
    <name type="ordered locus">Tpen_1157</name>
</gene>
<evidence type="ECO:0000255" key="1">
    <source>
        <dbReference type="HAMAP-Rule" id="MF_00001"/>
    </source>
</evidence>
<feature type="chain" id="PRO_0000321193" description="Aspartate carbamoyltransferase catalytic subunit">
    <location>
        <begin position="1"/>
        <end position="315"/>
    </location>
</feature>
<feature type="binding site" evidence="1">
    <location>
        <position position="64"/>
    </location>
    <ligand>
        <name>carbamoyl phosphate</name>
        <dbReference type="ChEBI" id="CHEBI:58228"/>
    </ligand>
</feature>
<feature type="binding site" evidence="1">
    <location>
        <position position="65"/>
    </location>
    <ligand>
        <name>carbamoyl phosphate</name>
        <dbReference type="ChEBI" id="CHEBI:58228"/>
    </ligand>
</feature>
<feature type="binding site" evidence="1">
    <location>
        <position position="93"/>
    </location>
    <ligand>
        <name>L-aspartate</name>
        <dbReference type="ChEBI" id="CHEBI:29991"/>
    </ligand>
</feature>
<feature type="binding site" evidence="1">
    <location>
        <position position="114"/>
    </location>
    <ligand>
        <name>carbamoyl phosphate</name>
        <dbReference type="ChEBI" id="CHEBI:58228"/>
    </ligand>
</feature>
<feature type="binding site" evidence="1">
    <location>
        <position position="142"/>
    </location>
    <ligand>
        <name>carbamoyl phosphate</name>
        <dbReference type="ChEBI" id="CHEBI:58228"/>
    </ligand>
</feature>
<feature type="binding site" evidence="1">
    <location>
        <position position="145"/>
    </location>
    <ligand>
        <name>carbamoyl phosphate</name>
        <dbReference type="ChEBI" id="CHEBI:58228"/>
    </ligand>
</feature>
<feature type="binding site" evidence="1">
    <location>
        <position position="175"/>
    </location>
    <ligand>
        <name>L-aspartate</name>
        <dbReference type="ChEBI" id="CHEBI:29991"/>
    </ligand>
</feature>
<feature type="binding site" evidence="1">
    <location>
        <position position="237"/>
    </location>
    <ligand>
        <name>L-aspartate</name>
        <dbReference type="ChEBI" id="CHEBI:29991"/>
    </ligand>
</feature>
<feature type="binding site" evidence="1">
    <location>
        <position position="276"/>
    </location>
    <ligand>
        <name>carbamoyl phosphate</name>
        <dbReference type="ChEBI" id="CHEBI:58228"/>
    </ligand>
</feature>
<feature type="binding site" evidence="1">
    <location>
        <position position="277"/>
    </location>
    <ligand>
        <name>carbamoyl phosphate</name>
        <dbReference type="ChEBI" id="CHEBI:58228"/>
    </ligand>
</feature>
<accession>A1RZC5</accession>
<comment type="function">
    <text evidence="1">Catalyzes the condensation of carbamoyl phosphate and aspartate to form carbamoyl aspartate and inorganic phosphate, the committed step in the de novo pyrimidine nucleotide biosynthesis pathway.</text>
</comment>
<comment type="catalytic activity">
    <reaction evidence="1">
        <text>carbamoyl phosphate + L-aspartate = N-carbamoyl-L-aspartate + phosphate + H(+)</text>
        <dbReference type="Rhea" id="RHEA:20013"/>
        <dbReference type="ChEBI" id="CHEBI:15378"/>
        <dbReference type="ChEBI" id="CHEBI:29991"/>
        <dbReference type="ChEBI" id="CHEBI:32814"/>
        <dbReference type="ChEBI" id="CHEBI:43474"/>
        <dbReference type="ChEBI" id="CHEBI:58228"/>
        <dbReference type="EC" id="2.1.3.2"/>
    </reaction>
</comment>
<comment type="pathway">
    <text evidence="1">Pyrimidine metabolism; UMP biosynthesis via de novo pathway; (S)-dihydroorotate from bicarbonate: step 2/3.</text>
</comment>
<comment type="subunit">
    <text evidence="1">Heterooligomer of catalytic and regulatory chains.</text>
</comment>
<comment type="similarity">
    <text evidence="1">Belongs to the aspartate/ornithine carbamoyltransferase superfamily. ATCase family.</text>
</comment>
<name>PYRB_THEPD</name>